<evidence type="ECO:0000250" key="1"/>
<evidence type="ECO:0000250" key="2">
    <source>
        <dbReference type="UniProtKB" id="Q9NWX6"/>
    </source>
</evidence>
<evidence type="ECO:0000305" key="3"/>
<proteinExistence type="evidence at protein level"/>
<protein>
    <recommendedName>
        <fullName>Probable tRNA(His) guanylyltransferase</fullName>
        <ecNumber evidence="2">2.7.7.79</ecNumber>
    </recommendedName>
    <alternativeName>
        <fullName>tRNA-histidine guanylyltransferase</fullName>
    </alternativeName>
</protein>
<feature type="chain" id="PRO_0000284985" description="Probable tRNA(His) guanylyltransferase">
    <location>
        <begin position="1"/>
        <end position="298"/>
    </location>
</feature>
<feature type="binding site" evidence="1">
    <location>
        <begin position="58"/>
        <end position="63"/>
    </location>
    <ligand>
        <name>GTP</name>
        <dbReference type="ChEBI" id="CHEBI:37565"/>
    </ligand>
</feature>
<feature type="binding site" evidence="1">
    <location>
        <position position="58"/>
    </location>
    <ligand>
        <name>Mg(2+)</name>
        <dbReference type="ChEBI" id="CHEBI:18420"/>
        <label>1</label>
        <note>catalytic</note>
    </ligand>
</feature>
<feature type="binding site" evidence="1">
    <location>
        <position position="58"/>
    </location>
    <ligand>
        <name>Mg(2+)</name>
        <dbReference type="ChEBI" id="CHEBI:18420"/>
        <label>2</label>
        <note>catalytic</note>
    </ligand>
</feature>
<feature type="binding site" evidence="1">
    <location>
        <position position="59"/>
    </location>
    <ligand>
        <name>Mg(2+)</name>
        <dbReference type="ChEBI" id="CHEBI:18420"/>
        <label>1</label>
        <note>catalytic</note>
    </ligand>
</feature>
<feature type="binding site" evidence="1">
    <location>
        <begin position="104"/>
        <end position="105"/>
    </location>
    <ligand>
        <name>GTP</name>
        <dbReference type="ChEBI" id="CHEBI:37565"/>
    </ligand>
</feature>
<feature type="binding site" evidence="1">
    <location>
        <position position="105"/>
    </location>
    <ligand>
        <name>Mg(2+)</name>
        <dbReference type="ChEBI" id="CHEBI:18420"/>
        <label>1</label>
        <note>catalytic</note>
    </ligand>
</feature>
<feature type="binding site" evidence="1">
    <location>
        <position position="105"/>
    </location>
    <ligand>
        <name>Mg(2+)</name>
        <dbReference type="ChEBI" id="CHEBI:18420"/>
        <label>2</label>
        <note>catalytic</note>
    </ligand>
</feature>
<feature type="sequence conflict" description="In Ref. 3; AAH92541." evidence="3" ref="3">
    <original>A</original>
    <variation>V</variation>
    <location>
        <position position="192"/>
    </location>
</feature>
<dbReference type="EC" id="2.7.7.79" evidence="2"/>
<dbReference type="EMBL" id="AK010876">
    <property type="protein sequence ID" value="BAB27240.1"/>
    <property type="molecule type" value="mRNA"/>
</dbReference>
<dbReference type="EMBL" id="AL645948">
    <property type="status" value="NOT_ANNOTATED_CDS"/>
    <property type="molecule type" value="Genomic_DNA"/>
</dbReference>
<dbReference type="EMBL" id="BC092541">
    <property type="protein sequence ID" value="AAH92541.1"/>
    <property type="molecule type" value="mRNA"/>
</dbReference>
<dbReference type="EMBL" id="BC115561">
    <property type="protein sequence ID" value="AAI15562.1"/>
    <property type="molecule type" value="mRNA"/>
</dbReference>
<dbReference type="EMBL" id="BC115560">
    <property type="protein sequence ID" value="AAI15561.1"/>
    <property type="molecule type" value="mRNA"/>
</dbReference>
<dbReference type="CCDS" id="CCDS36132.1"/>
<dbReference type="RefSeq" id="NP_001074438.1">
    <property type="nucleotide sequence ID" value="NM_001080969.3"/>
</dbReference>
<dbReference type="SMR" id="Q9CY52"/>
<dbReference type="BioGRID" id="211607">
    <property type="interactions" value="10"/>
</dbReference>
<dbReference type="FunCoup" id="Q9CY52">
    <property type="interactions" value="1601"/>
</dbReference>
<dbReference type="STRING" id="10090.ENSMUSP00000011398"/>
<dbReference type="iPTMnet" id="Q9CY52"/>
<dbReference type="PhosphoSitePlus" id="Q9CY52"/>
<dbReference type="PaxDb" id="10090-ENSMUSP00000011398"/>
<dbReference type="PeptideAtlas" id="Q9CY52"/>
<dbReference type="ProteomicsDB" id="262809"/>
<dbReference type="Pumba" id="Q9CY52"/>
<dbReference type="Antibodypedia" id="28457">
    <property type="antibodies" value="93 antibodies from 22 providers"/>
</dbReference>
<dbReference type="Ensembl" id="ENSMUST00000011398.13">
    <property type="protein sequence ID" value="ENSMUSP00000011398.7"/>
    <property type="gene ID" value="ENSMUSG00000011254.17"/>
</dbReference>
<dbReference type="GeneID" id="66628"/>
<dbReference type="KEGG" id="mmu:66628"/>
<dbReference type="UCSC" id="uc007inv.2">
    <property type="organism name" value="mouse"/>
</dbReference>
<dbReference type="AGR" id="MGI:1913878"/>
<dbReference type="CTD" id="54974"/>
<dbReference type="MGI" id="MGI:1913878">
    <property type="gene designation" value="Thg1l"/>
</dbReference>
<dbReference type="VEuPathDB" id="HostDB:ENSMUSG00000011254"/>
<dbReference type="eggNOG" id="KOG2721">
    <property type="taxonomic scope" value="Eukaryota"/>
</dbReference>
<dbReference type="GeneTree" id="ENSGT00390000011705"/>
<dbReference type="HOGENOM" id="CLU_044271_0_0_1"/>
<dbReference type="InParanoid" id="Q9CY52"/>
<dbReference type="OMA" id="WKQHTEI"/>
<dbReference type="OrthoDB" id="62560at2759"/>
<dbReference type="PhylomeDB" id="Q9CY52"/>
<dbReference type="TreeFam" id="TF325119"/>
<dbReference type="BioGRID-ORCS" id="66628">
    <property type="hits" value="23 hits in 72 CRISPR screens"/>
</dbReference>
<dbReference type="ChiTaRS" id="Thg1l">
    <property type="organism name" value="mouse"/>
</dbReference>
<dbReference type="PRO" id="PR:Q9CY52"/>
<dbReference type="Proteomes" id="UP000000589">
    <property type="component" value="Chromosome 11"/>
</dbReference>
<dbReference type="RNAct" id="Q9CY52">
    <property type="molecule type" value="protein"/>
</dbReference>
<dbReference type="Bgee" id="ENSMUSG00000011254">
    <property type="expression patterns" value="Expressed in spermatocyte and 141 other cell types or tissues"/>
</dbReference>
<dbReference type="ExpressionAtlas" id="Q9CY52">
    <property type="expression patterns" value="baseline and differential"/>
</dbReference>
<dbReference type="GO" id="GO:0005739">
    <property type="term" value="C:mitochondrion"/>
    <property type="evidence" value="ECO:0007669"/>
    <property type="project" value="UniProtKB-SubCell"/>
</dbReference>
<dbReference type="GO" id="GO:1990234">
    <property type="term" value="C:transferase complex"/>
    <property type="evidence" value="ECO:0007669"/>
    <property type="project" value="Ensembl"/>
</dbReference>
<dbReference type="GO" id="GO:0005524">
    <property type="term" value="F:ATP binding"/>
    <property type="evidence" value="ECO:0007669"/>
    <property type="project" value="Ensembl"/>
</dbReference>
<dbReference type="GO" id="GO:0005525">
    <property type="term" value="F:GTP binding"/>
    <property type="evidence" value="ECO:0007669"/>
    <property type="project" value="UniProtKB-KW"/>
</dbReference>
<dbReference type="GO" id="GO:0005085">
    <property type="term" value="F:guanyl-nucleotide exchange factor activity"/>
    <property type="evidence" value="ECO:0007669"/>
    <property type="project" value="Ensembl"/>
</dbReference>
<dbReference type="GO" id="GO:0042802">
    <property type="term" value="F:identical protein binding"/>
    <property type="evidence" value="ECO:0007669"/>
    <property type="project" value="Ensembl"/>
</dbReference>
<dbReference type="GO" id="GO:0000287">
    <property type="term" value="F:magnesium ion binding"/>
    <property type="evidence" value="ECO:0007669"/>
    <property type="project" value="Ensembl"/>
</dbReference>
<dbReference type="GO" id="GO:0008193">
    <property type="term" value="F:tRNA guanylyltransferase activity"/>
    <property type="evidence" value="ECO:0000250"/>
    <property type="project" value="UniProtKB"/>
</dbReference>
<dbReference type="GO" id="GO:0008053">
    <property type="term" value="P:mitochondrial fusion"/>
    <property type="evidence" value="ECO:0000250"/>
    <property type="project" value="UniProtKB"/>
</dbReference>
<dbReference type="GO" id="GO:0051289">
    <property type="term" value="P:protein homotetramerization"/>
    <property type="evidence" value="ECO:0007669"/>
    <property type="project" value="Ensembl"/>
</dbReference>
<dbReference type="GO" id="GO:0006979">
    <property type="term" value="P:response to oxidative stress"/>
    <property type="evidence" value="ECO:0000250"/>
    <property type="project" value="UniProtKB"/>
</dbReference>
<dbReference type="GO" id="GO:1990046">
    <property type="term" value="P:stress-induced mitochondrial fusion"/>
    <property type="evidence" value="ECO:0000250"/>
    <property type="project" value="UniProtKB"/>
</dbReference>
<dbReference type="GO" id="GO:0006400">
    <property type="term" value="P:tRNA modification"/>
    <property type="evidence" value="ECO:0000250"/>
    <property type="project" value="UniProtKB"/>
</dbReference>
<dbReference type="GO" id="GO:0008033">
    <property type="term" value="P:tRNA processing"/>
    <property type="evidence" value="ECO:0000250"/>
    <property type="project" value="UniProtKB"/>
</dbReference>
<dbReference type="FunFam" id="3.30.70.3000:FF:000001">
    <property type="entry name" value="tRNA(His) guanylyltransferase"/>
    <property type="match status" value="1"/>
</dbReference>
<dbReference type="Gene3D" id="3.30.70.3000">
    <property type="match status" value="1"/>
</dbReference>
<dbReference type="InterPro" id="IPR025845">
    <property type="entry name" value="Thg1_C_dom"/>
</dbReference>
<dbReference type="InterPro" id="IPR024956">
    <property type="entry name" value="tRNAHis_GuaTrfase_cat"/>
</dbReference>
<dbReference type="InterPro" id="IPR007537">
    <property type="entry name" value="tRNAHis_GuaTrfase_Thg1"/>
</dbReference>
<dbReference type="InterPro" id="IPR038469">
    <property type="entry name" value="tRNAHis_GuaTrfase_Thg1_sf"/>
</dbReference>
<dbReference type="PANTHER" id="PTHR12729">
    <property type="entry name" value="TRNA(HIS) GUANYLYLTRANSFERASE-RELATED"/>
    <property type="match status" value="1"/>
</dbReference>
<dbReference type="PANTHER" id="PTHR12729:SF6">
    <property type="entry name" value="TRNA(HIS) GUANYLYLTRANSFERASE-RELATED"/>
    <property type="match status" value="1"/>
</dbReference>
<dbReference type="Pfam" id="PF04446">
    <property type="entry name" value="Thg1"/>
    <property type="match status" value="1"/>
</dbReference>
<dbReference type="Pfam" id="PF14413">
    <property type="entry name" value="Thg1C"/>
    <property type="match status" value="1"/>
</dbReference>
<dbReference type="PIRSF" id="PIRSF028980">
    <property type="entry name" value="tRNAHis_guanylyltransferase"/>
    <property type="match status" value="1"/>
</dbReference>
<sequence>MWAFRTARIGSLLAATSVILRRCLRLGVAMAKSKFEYVRNFEVQDTCLPHCWVVVRLDGRNFHRFAEEHNFAKPNDSRALHLMTKCAQTVMEELEDIVIAYGQSDEYSFVFRKKSNWFKRRASKFMTLVASQFASSYVFYWRDYFEDQPLRYPPGFDGRVVLYPSNQTLKDYLSWRQADCHINNLYNTVFWALIQQSGLTPVQAQQRLKGTLTADKNEILFSEFHINYNNEPHMYRKGTVLVWQKVEEVRTQEVRLPAEMEGEKKAVARTRTRVVALNCDLIGDAFWKEHPEILAEEN</sequence>
<comment type="function">
    <text evidence="2">Adds a GMP to the 5'-end of tRNA(His) after transcription and RNase P cleavage. This step is essential for proper recognition of the tRNA and for the fidelity of protein synthesis. Also functions as a guanyl-nucleotide exchange factor/GEF for the MFN1 and MFN2 mitofusins thereby regulating mitochondrial fusion. By regulating both mitochondrial dynamics and bioenergetic function, it contributes to cell survival following oxidative stress.</text>
</comment>
<comment type="catalytic activity">
    <reaction evidence="2">
        <text>a 5'-end ribonucleotide-tRNA(His) + GTP + ATP + H2O = a 5'-end phospho-guanosine-ribonucleotide-tRNA(His) + AMP + 2 diphosphate + H(+)</text>
        <dbReference type="Rhea" id="RHEA:54564"/>
        <dbReference type="Rhea" id="RHEA-COMP:14193"/>
        <dbReference type="Rhea" id="RHEA-COMP:14917"/>
        <dbReference type="ChEBI" id="CHEBI:15377"/>
        <dbReference type="ChEBI" id="CHEBI:15378"/>
        <dbReference type="ChEBI" id="CHEBI:30616"/>
        <dbReference type="ChEBI" id="CHEBI:33019"/>
        <dbReference type="ChEBI" id="CHEBI:37565"/>
        <dbReference type="ChEBI" id="CHEBI:138282"/>
        <dbReference type="ChEBI" id="CHEBI:141847"/>
        <dbReference type="ChEBI" id="CHEBI:456215"/>
        <dbReference type="EC" id="2.7.7.79"/>
    </reaction>
</comment>
<comment type="cofactor">
    <cofactor evidence="1">
        <name>Mg(2+)</name>
        <dbReference type="ChEBI" id="CHEBI:18420"/>
    </cofactor>
    <text evidence="1">Binds 2 magnesium ions per subunit.</text>
</comment>
<comment type="subunit">
    <text evidence="2">Homotetramer. Interacts with MFN1 and MFN2; functions as a guanyl-nucleotide exchange factor/GEF for MFN2 and also probably MFN1.</text>
</comment>
<comment type="subcellular location">
    <subcellularLocation>
        <location>Cytoplasm</location>
    </subcellularLocation>
    <subcellularLocation>
        <location evidence="2">Mitochondrion</location>
    </subcellularLocation>
</comment>
<comment type="similarity">
    <text evidence="3">Belongs to the tRNA(His) guanylyltransferase family.</text>
</comment>
<name>THG1_MOUSE</name>
<organism>
    <name type="scientific">Mus musculus</name>
    <name type="common">Mouse</name>
    <dbReference type="NCBI Taxonomy" id="10090"/>
    <lineage>
        <taxon>Eukaryota</taxon>
        <taxon>Metazoa</taxon>
        <taxon>Chordata</taxon>
        <taxon>Craniata</taxon>
        <taxon>Vertebrata</taxon>
        <taxon>Euteleostomi</taxon>
        <taxon>Mammalia</taxon>
        <taxon>Eutheria</taxon>
        <taxon>Euarchontoglires</taxon>
        <taxon>Glires</taxon>
        <taxon>Rodentia</taxon>
        <taxon>Myomorpha</taxon>
        <taxon>Muroidea</taxon>
        <taxon>Muridae</taxon>
        <taxon>Murinae</taxon>
        <taxon>Mus</taxon>
        <taxon>Mus</taxon>
    </lineage>
</organism>
<keyword id="KW-0963">Cytoplasm</keyword>
<keyword id="KW-0342">GTP-binding</keyword>
<keyword id="KW-0460">Magnesium</keyword>
<keyword id="KW-0479">Metal-binding</keyword>
<keyword id="KW-0496">Mitochondrion</keyword>
<keyword id="KW-0547">Nucleotide-binding</keyword>
<keyword id="KW-0548">Nucleotidyltransferase</keyword>
<keyword id="KW-1185">Reference proteome</keyword>
<keyword id="KW-0808">Transferase</keyword>
<keyword id="KW-0819">tRNA processing</keyword>
<gene>
    <name type="primary">Thg1l</name>
</gene>
<accession>Q9CY52</accession>
<accession>Q562D7</accession>
<reference key="1">
    <citation type="journal article" date="2005" name="Science">
        <title>The transcriptional landscape of the mammalian genome.</title>
        <authorList>
            <person name="Carninci P."/>
            <person name="Kasukawa T."/>
            <person name="Katayama S."/>
            <person name="Gough J."/>
            <person name="Frith M.C."/>
            <person name="Maeda N."/>
            <person name="Oyama R."/>
            <person name="Ravasi T."/>
            <person name="Lenhard B."/>
            <person name="Wells C."/>
            <person name="Kodzius R."/>
            <person name="Shimokawa K."/>
            <person name="Bajic V.B."/>
            <person name="Brenner S.E."/>
            <person name="Batalov S."/>
            <person name="Forrest A.R."/>
            <person name="Zavolan M."/>
            <person name="Davis M.J."/>
            <person name="Wilming L.G."/>
            <person name="Aidinis V."/>
            <person name="Allen J.E."/>
            <person name="Ambesi-Impiombato A."/>
            <person name="Apweiler R."/>
            <person name="Aturaliya R.N."/>
            <person name="Bailey T.L."/>
            <person name="Bansal M."/>
            <person name="Baxter L."/>
            <person name="Beisel K.W."/>
            <person name="Bersano T."/>
            <person name="Bono H."/>
            <person name="Chalk A.M."/>
            <person name="Chiu K.P."/>
            <person name="Choudhary V."/>
            <person name="Christoffels A."/>
            <person name="Clutterbuck D.R."/>
            <person name="Crowe M.L."/>
            <person name="Dalla E."/>
            <person name="Dalrymple B.P."/>
            <person name="de Bono B."/>
            <person name="Della Gatta G."/>
            <person name="di Bernardo D."/>
            <person name="Down T."/>
            <person name="Engstrom P."/>
            <person name="Fagiolini M."/>
            <person name="Faulkner G."/>
            <person name="Fletcher C.F."/>
            <person name="Fukushima T."/>
            <person name="Furuno M."/>
            <person name="Futaki S."/>
            <person name="Gariboldi M."/>
            <person name="Georgii-Hemming P."/>
            <person name="Gingeras T.R."/>
            <person name="Gojobori T."/>
            <person name="Green R.E."/>
            <person name="Gustincich S."/>
            <person name="Harbers M."/>
            <person name="Hayashi Y."/>
            <person name="Hensch T.K."/>
            <person name="Hirokawa N."/>
            <person name="Hill D."/>
            <person name="Huminiecki L."/>
            <person name="Iacono M."/>
            <person name="Ikeo K."/>
            <person name="Iwama A."/>
            <person name="Ishikawa T."/>
            <person name="Jakt M."/>
            <person name="Kanapin A."/>
            <person name="Katoh M."/>
            <person name="Kawasawa Y."/>
            <person name="Kelso J."/>
            <person name="Kitamura H."/>
            <person name="Kitano H."/>
            <person name="Kollias G."/>
            <person name="Krishnan S.P."/>
            <person name="Kruger A."/>
            <person name="Kummerfeld S.K."/>
            <person name="Kurochkin I.V."/>
            <person name="Lareau L.F."/>
            <person name="Lazarevic D."/>
            <person name="Lipovich L."/>
            <person name="Liu J."/>
            <person name="Liuni S."/>
            <person name="McWilliam S."/>
            <person name="Madan Babu M."/>
            <person name="Madera M."/>
            <person name="Marchionni L."/>
            <person name="Matsuda H."/>
            <person name="Matsuzawa S."/>
            <person name="Miki H."/>
            <person name="Mignone F."/>
            <person name="Miyake S."/>
            <person name="Morris K."/>
            <person name="Mottagui-Tabar S."/>
            <person name="Mulder N."/>
            <person name="Nakano N."/>
            <person name="Nakauchi H."/>
            <person name="Ng P."/>
            <person name="Nilsson R."/>
            <person name="Nishiguchi S."/>
            <person name="Nishikawa S."/>
            <person name="Nori F."/>
            <person name="Ohara O."/>
            <person name="Okazaki Y."/>
            <person name="Orlando V."/>
            <person name="Pang K.C."/>
            <person name="Pavan W.J."/>
            <person name="Pavesi G."/>
            <person name="Pesole G."/>
            <person name="Petrovsky N."/>
            <person name="Piazza S."/>
            <person name="Reed J."/>
            <person name="Reid J.F."/>
            <person name="Ring B.Z."/>
            <person name="Ringwald M."/>
            <person name="Rost B."/>
            <person name="Ruan Y."/>
            <person name="Salzberg S.L."/>
            <person name="Sandelin A."/>
            <person name="Schneider C."/>
            <person name="Schoenbach C."/>
            <person name="Sekiguchi K."/>
            <person name="Semple C.A."/>
            <person name="Seno S."/>
            <person name="Sessa L."/>
            <person name="Sheng Y."/>
            <person name="Shibata Y."/>
            <person name="Shimada H."/>
            <person name="Shimada K."/>
            <person name="Silva D."/>
            <person name="Sinclair B."/>
            <person name="Sperling S."/>
            <person name="Stupka E."/>
            <person name="Sugiura K."/>
            <person name="Sultana R."/>
            <person name="Takenaka Y."/>
            <person name="Taki K."/>
            <person name="Tammoja K."/>
            <person name="Tan S.L."/>
            <person name="Tang S."/>
            <person name="Taylor M.S."/>
            <person name="Tegner J."/>
            <person name="Teichmann S.A."/>
            <person name="Ueda H.R."/>
            <person name="van Nimwegen E."/>
            <person name="Verardo R."/>
            <person name="Wei C.L."/>
            <person name="Yagi K."/>
            <person name="Yamanishi H."/>
            <person name="Zabarovsky E."/>
            <person name="Zhu S."/>
            <person name="Zimmer A."/>
            <person name="Hide W."/>
            <person name="Bult C."/>
            <person name="Grimmond S.M."/>
            <person name="Teasdale R.D."/>
            <person name="Liu E.T."/>
            <person name="Brusic V."/>
            <person name="Quackenbush J."/>
            <person name="Wahlestedt C."/>
            <person name="Mattick J.S."/>
            <person name="Hume D.A."/>
            <person name="Kai C."/>
            <person name="Sasaki D."/>
            <person name="Tomaru Y."/>
            <person name="Fukuda S."/>
            <person name="Kanamori-Katayama M."/>
            <person name="Suzuki M."/>
            <person name="Aoki J."/>
            <person name="Arakawa T."/>
            <person name="Iida J."/>
            <person name="Imamura K."/>
            <person name="Itoh M."/>
            <person name="Kato T."/>
            <person name="Kawaji H."/>
            <person name="Kawagashira N."/>
            <person name="Kawashima T."/>
            <person name="Kojima M."/>
            <person name="Kondo S."/>
            <person name="Konno H."/>
            <person name="Nakano K."/>
            <person name="Ninomiya N."/>
            <person name="Nishio T."/>
            <person name="Okada M."/>
            <person name="Plessy C."/>
            <person name="Shibata K."/>
            <person name="Shiraki T."/>
            <person name="Suzuki S."/>
            <person name="Tagami M."/>
            <person name="Waki K."/>
            <person name="Watahiki A."/>
            <person name="Okamura-Oho Y."/>
            <person name="Suzuki H."/>
            <person name="Kawai J."/>
            <person name="Hayashizaki Y."/>
        </authorList>
    </citation>
    <scope>NUCLEOTIDE SEQUENCE [LARGE SCALE MRNA]</scope>
    <source>
        <strain>C57BL/6J</strain>
        <tissue>Liver</tissue>
    </source>
</reference>
<reference key="2">
    <citation type="journal article" date="2009" name="PLoS Biol.">
        <title>Lineage-specific biology revealed by a finished genome assembly of the mouse.</title>
        <authorList>
            <person name="Church D.M."/>
            <person name="Goodstadt L."/>
            <person name="Hillier L.W."/>
            <person name="Zody M.C."/>
            <person name="Goldstein S."/>
            <person name="She X."/>
            <person name="Bult C.J."/>
            <person name="Agarwala R."/>
            <person name="Cherry J.L."/>
            <person name="DiCuccio M."/>
            <person name="Hlavina W."/>
            <person name="Kapustin Y."/>
            <person name="Meric P."/>
            <person name="Maglott D."/>
            <person name="Birtle Z."/>
            <person name="Marques A.C."/>
            <person name="Graves T."/>
            <person name="Zhou S."/>
            <person name="Teague B."/>
            <person name="Potamousis K."/>
            <person name="Churas C."/>
            <person name="Place M."/>
            <person name="Herschleb J."/>
            <person name="Runnheim R."/>
            <person name="Forrest D."/>
            <person name="Amos-Landgraf J."/>
            <person name="Schwartz D.C."/>
            <person name="Cheng Z."/>
            <person name="Lindblad-Toh K."/>
            <person name="Eichler E.E."/>
            <person name="Ponting C.P."/>
        </authorList>
    </citation>
    <scope>NUCLEOTIDE SEQUENCE [LARGE SCALE GENOMIC DNA]</scope>
    <source>
        <strain>C57BL/6J</strain>
    </source>
</reference>
<reference key="3">
    <citation type="journal article" date="2004" name="Genome Res.">
        <title>The status, quality, and expansion of the NIH full-length cDNA project: the Mammalian Gene Collection (MGC).</title>
        <authorList>
            <consortium name="The MGC Project Team"/>
        </authorList>
    </citation>
    <scope>NUCLEOTIDE SEQUENCE [LARGE SCALE MRNA]</scope>
    <source>
        <tissue>Testis</tissue>
    </source>
</reference>
<reference key="4">
    <citation type="journal article" date="2010" name="Cell">
        <title>A tissue-specific atlas of mouse protein phosphorylation and expression.</title>
        <authorList>
            <person name="Huttlin E.L."/>
            <person name="Jedrychowski M.P."/>
            <person name="Elias J.E."/>
            <person name="Goswami T."/>
            <person name="Rad R."/>
            <person name="Beausoleil S.A."/>
            <person name="Villen J."/>
            <person name="Haas W."/>
            <person name="Sowa M.E."/>
            <person name="Gygi S.P."/>
        </authorList>
    </citation>
    <scope>IDENTIFICATION BY MASS SPECTROMETRY [LARGE SCALE ANALYSIS]</scope>
    <source>
        <tissue>Brain</tissue>
        <tissue>Spleen</tissue>
        <tissue>Testis</tissue>
    </source>
</reference>